<accession>P9WJ23</accession>
<accession>L0T9W7</accession>
<accession>Q79FD2</accession>
<accession>Q8VJG5</accession>
<proteinExistence type="evidence at protein level"/>
<protein>
    <recommendedName>
        <fullName>Antitoxin VapB39</fullName>
    </recommendedName>
</protein>
<dbReference type="EMBL" id="AL123456">
    <property type="protein sequence ID" value="CCP45325.1"/>
    <property type="molecule type" value="Genomic_DNA"/>
</dbReference>
<dbReference type="RefSeq" id="WP_003412975.1">
    <property type="nucleotide sequence ID" value="NZ_NVQJ01000032.1"/>
</dbReference>
<dbReference type="RefSeq" id="YP_177672.1">
    <property type="nucleotide sequence ID" value="NC_000962.3"/>
</dbReference>
<dbReference type="SMR" id="P9WJ23"/>
<dbReference type="STRING" id="83332.Rv2530A"/>
<dbReference type="PaxDb" id="83332-Rv2530A"/>
<dbReference type="DNASU" id="3205085"/>
<dbReference type="GeneID" id="3205085"/>
<dbReference type="KEGG" id="mtu:Rv2530A"/>
<dbReference type="KEGG" id="mtv:RVBD_2530A"/>
<dbReference type="TubercuList" id="Rv2530A"/>
<dbReference type="eggNOG" id="ENOG5033NYH">
    <property type="taxonomic scope" value="Bacteria"/>
</dbReference>
<dbReference type="InParanoid" id="P9WJ23"/>
<dbReference type="OrthoDB" id="9813767at2"/>
<dbReference type="PhylomeDB" id="P9WJ23"/>
<dbReference type="Proteomes" id="UP000001584">
    <property type="component" value="Chromosome"/>
</dbReference>
<dbReference type="GO" id="GO:0045927">
    <property type="term" value="P:positive regulation of growth"/>
    <property type="evidence" value="ECO:0000315"/>
    <property type="project" value="MTBBASE"/>
</dbReference>
<comment type="function">
    <text evidence="1">Antitoxin component of a type II toxin-antitoxin (TA) system. Upon expression in M.smegmatis neutralizes the effect of cognate toxin VapC39.</text>
</comment>
<evidence type="ECO:0000269" key="1">
    <source>
    </source>
</evidence>
<feature type="chain" id="PRO_0000408081" description="Antitoxin VapB39">
    <location>
        <begin position="1"/>
        <end position="74"/>
    </location>
</feature>
<sequence length="74" mass="7994">MRTTLQIDDDVLEDARSIARSEGKSVGAVISELARRSLRPVGIVEVDGFPVFDVPPDAPTVTSEDVVRALEDDV</sequence>
<organism>
    <name type="scientific">Mycobacterium tuberculosis (strain ATCC 25618 / H37Rv)</name>
    <dbReference type="NCBI Taxonomy" id="83332"/>
    <lineage>
        <taxon>Bacteria</taxon>
        <taxon>Bacillati</taxon>
        <taxon>Actinomycetota</taxon>
        <taxon>Actinomycetes</taxon>
        <taxon>Mycobacteriales</taxon>
        <taxon>Mycobacteriaceae</taxon>
        <taxon>Mycobacterium</taxon>
        <taxon>Mycobacterium tuberculosis complex</taxon>
    </lineage>
</organism>
<name>VPB39_MYCTU</name>
<gene>
    <name type="primary">vapB39</name>
    <name type="ordered locus">Rv2530A</name>
</gene>
<keyword id="KW-1185">Reference proteome</keyword>
<keyword id="KW-1277">Toxin-antitoxin system</keyword>
<reference key="1">
    <citation type="journal article" date="2002" name="Microbiology">
        <title>Re-annotation of the genome sequence of Mycobacterium tuberculosis H37Rv.</title>
        <authorList>
            <person name="Camus J.-C."/>
            <person name="Pryor M.J."/>
            <person name="Medigue C."/>
            <person name="Cole S.T."/>
        </authorList>
    </citation>
    <scope>IDENTIFICATION</scope>
    <source>
        <strain>ATCC 25618 / H37Rv</strain>
    </source>
</reference>
<reference key="2">
    <citation type="journal article" date="1998" name="Nature">
        <title>Deciphering the biology of Mycobacterium tuberculosis from the complete genome sequence.</title>
        <authorList>
            <person name="Cole S.T."/>
            <person name="Brosch R."/>
            <person name="Parkhill J."/>
            <person name="Garnier T."/>
            <person name="Churcher C.M."/>
            <person name="Harris D.E."/>
            <person name="Gordon S.V."/>
            <person name="Eiglmeier K."/>
            <person name="Gas S."/>
            <person name="Barry C.E. III"/>
            <person name="Tekaia F."/>
            <person name="Badcock K."/>
            <person name="Basham D."/>
            <person name="Brown D."/>
            <person name="Chillingworth T."/>
            <person name="Connor R."/>
            <person name="Davies R.M."/>
            <person name="Devlin K."/>
            <person name="Feltwell T."/>
            <person name="Gentles S."/>
            <person name="Hamlin N."/>
            <person name="Holroyd S."/>
            <person name="Hornsby T."/>
            <person name="Jagels K."/>
            <person name="Krogh A."/>
            <person name="McLean J."/>
            <person name="Moule S."/>
            <person name="Murphy L.D."/>
            <person name="Oliver S."/>
            <person name="Osborne J."/>
            <person name="Quail M.A."/>
            <person name="Rajandream M.A."/>
            <person name="Rogers J."/>
            <person name="Rutter S."/>
            <person name="Seeger K."/>
            <person name="Skelton S."/>
            <person name="Squares S."/>
            <person name="Squares R."/>
            <person name="Sulston J.E."/>
            <person name="Taylor K."/>
            <person name="Whitehead S."/>
            <person name="Barrell B.G."/>
        </authorList>
    </citation>
    <scope>NUCLEOTIDE SEQUENCE [LARGE SCALE GENOMIC DNA]</scope>
    <source>
        <strain>ATCC 25618 / H37Rv</strain>
    </source>
</reference>
<reference key="3">
    <citation type="journal article" date="2009" name="PLoS Genet.">
        <title>Comprehensive functional analysis of Mycobacterium tuberculosis toxin-antitoxin systems: implications for pathogenesis, stress responses, and evolution.</title>
        <authorList>
            <person name="Ramage H.R."/>
            <person name="Connolly L.E."/>
            <person name="Cox J.S."/>
        </authorList>
    </citation>
    <scope>EXPRESSION IN M.SMEGMATIS</scope>
    <scope>FUNCTION AS AN ANTITOXIN</scope>
    <source>
        <strain>ATCC 35801 / TMC 107 / Erdman</strain>
    </source>
</reference>
<reference key="4">
    <citation type="journal article" date="2011" name="Mol. Cell. Proteomics">
        <title>Proteogenomic analysis of Mycobacterium tuberculosis by high resolution mass spectrometry.</title>
        <authorList>
            <person name="Kelkar D.S."/>
            <person name="Kumar D."/>
            <person name="Kumar P."/>
            <person name="Balakrishnan L."/>
            <person name="Muthusamy B."/>
            <person name="Yadav A.K."/>
            <person name="Shrivastava P."/>
            <person name="Marimuthu A."/>
            <person name="Anand S."/>
            <person name="Sundaram H."/>
            <person name="Kingsbury R."/>
            <person name="Harsha H.C."/>
            <person name="Nair B."/>
            <person name="Prasad T.S."/>
            <person name="Chauhan D.S."/>
            <person name="Katoch K."/>
            <person name="Katoch V.M."/>
            <person name="Kumar P."/>
            <person name="Chaerkady R."/>
            <person name="Ramachandran S."/>
            <person name="Dash D."/>
            <person name="Pandey A."/>
        </authorList>
    </citation>
    <scope>IDENTIFICATION BY MASS SPECTROMETRY [LARGE SCALE ANALYSIS]</scope>
    <source>
        <strain>ATCC 25618 / H37Rv</strain>
    </source>
</reference>